<accession>O28220</accession>
<name>TYW3_ARCFU</name>
<comment type="function">
    <text evidence="1">S-adenosyl-L-methionine-dependent methyltransferase that acts as a component of the wyosine derivatives biosynthesis pathway. Probably methylates N-4 position of wybutosine-86 to produce wybutosine-72.</text>
</comment>
<comment type="catalytic activity">
    <reaction evidence="1">
        <text>4-demethyl-7-[(3S)-3-amino-3-carboxypropyl]wyosine(37) in tRNA(Phe) + S-adenosyl-L-methionine = 7-[(3S)-3-amino-3-carboxypropyl]wyosine(37) in tRNA(Phe) + S-adenosyl-L-homocysteine + H(+)</text>
        <dbReference type="Rhea" id="RHEA:36635"/>
        <dbReference type="Rhea" id="RHEA-COMP:10378"/>
        <dbReference type="Rhea" id="RHEA-COMP:10379"/>
        <dbReference type="ChEBI" id="CHEBI:15378"/>
        <dbReference type="ChEBI" id="CHEBI:57856"/>
        <dbReference type="ChEBI" id="CHEBI:59789"/>
        <dbReference type="ChEBI" id="CHEBI:73543"/>
        <dbReference type="ChEBI" id="CHEBI:73550"/>
        <dbReference type="EC" id="2.1.1.282"/>
    </reaction>
</comment>
<comment type="similarity">
    <text evidence="1">Belongs to the TYW3 family.</text>
</comment>
<reference key="1">
    <citation type="journal article" date="1997" name="Nature">
        <title>The complete genome sequence of the hyperthermophilic, sulphate-reducing archaeon Archaeoglobus fulgidus.</title>
        <authorList>
            <person name="Klenk H.-P."/>
            <person name="Clayton R.A."/>
            <person name="Tomb J.-F."/>
            <person name="White O."/>
            <person name="Nelson K.E."/>
            <person name="Ketchum K.A."/>
            <person name="Dodson R.J."/>
            <person name="Gwinn M.L."/>
            <person name="Hickey E.K."/>
            <person name="Peterson J.D."/>
            <person name="Richardson D.L."/>
            <person name="Kerlavage A.R."/>
            <person name="Graham D.E."/>
            <person name="Kyrpides N.C."/>
            <person name="Fleischmann R.D."/>
            <person name="Quackenbush J."/>
            <person name="Lee N.H."/>
            <person name="Sutton G.G."/>
            <person name="Gill S.R."/>
            <person name="Kirkness E.F."/>
            <person name="Dougherty B.A."/>
            <person name="McKenney K."/>
            <person name="Adams M.D."/>
            <person name="Loftus B.J."/>
            <person name="Peterson S.N."/>
            <person name="Reich C.I."/>
            <person name="McNeil L.K."/>
            <person name="Badger J.H."/>
            <person name="Glodek A."/>
            <person name="Zhou L."/>
            <person name="Overbeek R."/>
            <person name="Gocayne J.D."/>
            <person name="Weidman J.F."/>
            <person name="McDonald L.A."/>
            <person name="Utterback T.R."/>
            <person name="Cotton M.D."/>
            <person name="Spriggs T."/>
            <person name="Artiach P."/>
            <person name="Kaine B.P."/>
            <person name="Sykes S.M."/>
            <person name="Sadow P.W."/>
            <person name="D'Andrea K.P."/>
            <person name="Bowman C."/>
            <person name="Fujii C."/>
            <person name="Garland S.A."/>
            <person name="Mason T.M."/>
            <person name="Olsen G.J."/>
            <person name="Fraser C.M."/>
            <person name="Smith H.O."/>
            <person name="Woese C.R."/>
            <person name="Venter J.C."/>
        </authorList>
    </citation>
    <scope>NUCLEOTIDE SEQUENCE [LARGE SCALE GENOMIC DNA]</scope>
    <source>
        <strain>ATCC 49558 / DSM 4304 / JCM 9628 / NBRC 100126 / VC-16</strain>
    </source>
</reference>
<reference key="2">
    <citation type="submission" date="2007-06" db="PDB data bank">
        <title>Crystal structure of uncharacterized protein AF2059 (2648472) from Archaeoglobus fulgidus at 1.95 A resolution.</title>
        <authorList>
            <consortium name="Joint Center for Structural Genomics (JCSG)"/>
        </authorList>
    </citation>
    <scope>X-RAY CRYSTALLOGRAPHY (1.95 ANGSTROMS)</scope>
</reference>
<organism>
    <name type="scientific">Archaeoglobus fulgidus (strain ATCC 49558 / DSM 4304 / JCM 9628 / NBRC 100126 / VC-16)</name>
    <dbReference type="NCBI Taxonomy" id="224325"/>
    <lineage>
        <taxon>Archaea</taxon>
        <taxon>Methanobacteriati</taxon>
        <taxon>Methanobacteriota</taxon>
        <taxon>Archaeoglobi</taxon>
        <taxon>Archaeoglobales</taxon>
        <taxon>Archaeoglobaceae</taxon>
        <taxon>Archaeoglobus</taxon>
    </lineage>
</organism>
<feature type="chain" id="PRO_0000157092" description="tRNA(Phe) 7-((3-amino-3-carboxypropyl)-4-demethylwyosine(37)-N(4))-methyltransferase">
    <location>
        <begin position="1"/>
        <end position="196"/>
    </location>
</feature>
<feature type="helix" evidence="2">
    <location>
        <begin position="3"/>
        <end position="19"/>
    </location>
</feature>
<feature type="helix" evidence="2">
    <location>
        <begin position="25"/>
        <end position="27"/>
    </location>
</feature>
<feature type="helix" evidence="2">
    <location>
        <begin position="28"/>
        <end position="35"/>
    </location>
</feature>
<feature type="strand" evidence="2">
    <location>
        <begin position="40"/>
        <end position="46"/>
    </location>
</feature>
<feature type="strand" evidence="2">
    <location>
        <begin position="49"/>
        <end position="57"/>
    </location>
</feature>
<feature type="helix" evidence="2">
    <location>
        <begin position="61"/>
        <end position="63"/>
    </location>
</feature>
<feature type="strand" evidence="2">
    <location>
        <begin position="65"/>
        <end position="72"/>
    </location>
</feature>
<feature type="helix" evidence="2">
    <location>
        <begin position="76"/>
        <end position="83"/>
    </location>
</feature>
<feature type="strand" evidence="2">
    <location>
        <begin position="87"/>
        <end position="95"/>
    </location>
</feature>
<feature type="strand" evidence="2">
    <location>
        <begin position="98"/>
        <end position="105"/>
    </location>
</feature>
<feature type="helix" evidence="2">
    <location>
        <begin position="106"/>
        <end position="119"/>
    </location>
</feature>
<feature type="strand" evidence="2">
    <location>
        <begin position="125"/>
        <end position="128"/>
    </location>
</feature>
<feature type="turn" evidence="2">
    <location>
        <begin position="129"/>
        <end position="132"/>
    </location>
</feature>
<feature type="strand" evidence="2">
    <location>
        <begin position="133"/>
        <end position="136"/>
    </location>
</feature>
<feature type="strand" evidence="2">
    <location>
        <begin position="142"/>
        <end position="148"/>
    </location>
</feature>
<feature type="strand" evidence="2">
    <location>
        <begin position="151"/>
        <end position="154"/>
    </location>
</feature>
<feature type="helix" evidence="2">
    <location>
        <begin position="156"/>
        <end position="188"/>
    </location>
</feature>
<feature type="turn" evidence="2">
    <location>
        <begin position="189"/>
        <end position="193"/>
    </location>
</feature>
<proteinExistence type="evidence at protein level"/>
<evidence type="ECO:0000255" key="1">
    <source>
        <dbReference type="HAMAP-Rule" id="MF_00266"/>
    </source>
</evidence>
<evidence type="ECO:0007829" key="2">
    <source>
        <dbReference type="PDB" id="2QG3"/>
    </source>
</evidence>
<dbReference type="EC" id="2.1.1.282" evidence="1"/>
<dbReference type="EMBL" id="AE000782">
    <property type="protein sequence ID" value="AAB89192.1"/>
    <property type="molecule type" value="Genomic_DNA"/>
</dbReference>
<dbReference type="PIR" id="B69507">
    <property type="entry name" value="B69507"/>
</dbReference>
<dbReference type="PDB" id="2QG3">
    <property type="method" value="X-ray"/>
    <property type="resolution" value="1.95 A"/>
    <property type="chains" value="A/B=1-196"/>
</dbReference>
<dbReference type="PDBsum" id="2QG3"/>
<dbReference type="SMR" id="O28220"/>
<dbReference type="STRING" id="224325.AF_2059"/>
<dbReference type="PaxDb" id="224325-AF_2059"/>
<dbReference type="EnsemblBacteria" id="AAB89192">
    <property type="protein sequence ID" value="AAB89192"/>
    <property type="gene ID" value="AF_2059"/>
</dbReference>
<dbReference type="KEGG" id="afu:AF_2059"/>
<dbReference type="eggNOG" id="arCOG04156">
    <property type="taxonomic scope" value="Archaea"/>
</dbReference>
<dbReference type="HOGENOM" id="CLU_047426_2_0_2"/>
<dbReference type="OrthoDB" id="19299at2157"/>
<dbReference type="PhylomeDB" id="O28220"/>
<dbReference type="EvolutionaryTrace" id="O28220"/>
<dbReference type="Proteomes" id="UP000002199">
    <property type="component" value="Chromosome"/>
</dbReference>
<dbReference type="GO" id="GO:0008175">
    <property type="term" value="F:tRNA methyltransferase activity"/>
    <property type="evidence" value="ECO:0007669"/>
    <property type="project" value="InterPro"/>
</dbReference>
<dbReference type="GO" id="GO:0030488">
    <property type="term" value="P:tRNA methylation"/>
    <property type="evidence" value="ECO:0007669"/>
    <property type="project" value="InterPro"/>
</dbReference>
<dbReference type="GO" id="GO:0031591">
    <property type="term" value="P:wybutosine biosynthetic process"/>
    <property type="evidence" value="ECO:0007669"/>
    <property type="project" value="InterPro"/>
</dbReference>
<dbReference type="Gene3D" id="3.30.1960.10">
    <property type="entry name" value="tRNA wybutosine-synthesizing-like"/>
    <property type="match status" value="1"/>
</dbReference>
<dbReference type="HAMAP" id="MF_00266">
    <property type="entry name" value="TYW3_archaea"/>
    <property type="match status" value="1"/>
</dbReference>
<dbReference type="InterPro" id="IPR022908">
    <property type="entry name" value="Taw3"/>
</dbReference>
<dbReference type="InterPro" id="IPR003827">
    <property type="entry name" value="tRNA_yW-synthesising"/>
</dbReference>
<dbReference type="InterPro" id="IPR036602">
    <property type="entry name" value="tRNA_yW-synthesising-like_sf"/>
</dbReference>
<dbReference type="NCBIfam" id="NF003267">
    <property type="entry name" value="PRK04235.1-6"/>
    <property type="match status" value="1"/>
</dbReference>
<dbReference type="PANTHER" id="PTHR48418">
    <property type="entry name" value="TRNA WYBUTOSINE-SYNTHESIZING PROTEIN 3"/>
    <property type="match status" value="1"/>
</dbReference>
<dbReference type="PANTHER" id="PTHR48418:SF1">
    <property type="entry name" value="TRNA WYBUTOSINE-SYNTHESIZING PROTEIN 3"/>
    <property type="match status" value="1"/>
</dbReference>
<dbReference type="Pfam" id="PF02676">
    <property type="entry name" value="TYW3"/>
    <property type="match status" value="1"/>
</dbReference>
<dbReference type="SUPFAM" id="SSF111278">
    <property type="entry name" value="SSo0622-like"/>
    <property type="match status" value="1"/>
</dbReference>
<gene>
    <name evidence="1" type="primary">taw3</name>
    <name type="ordered locus">AF_2059</name>
</gene>
<keyword id="KW-0002">3D-structure</keyword>
<keyword id="KW-0489">Methyltransferase</keyword>
<keyword id="KW-1185">Reference proteome</keyword>
<keyword id="KW-0949">S-adenosyl-L-methionine</keyword>
<keyword id="KW-0808">Transferase</keyword>
<keyword id="KW-0819">tRNA processing</keyword>
<sequence length="196" mass="22080">MMWEQFKKEKLRGYLEAKNQRKVDFDIVELLDLINSFDDFVTLSSCSGRIAVVDLEKPGDKASSLFLGKWHEGVEVSEVAEAALRSRKVAWLIQYPPIIHVACRNIGAAKLLMNAANTAGFRRSGVISLSNYVVEIASLERIELPVAEKGLMLVDDAYLSYVVRWANEKLLKGKEKLGRLQEALESLQRENAYCSD</sequence>
<protein>
    <recommendedName>
        <fullName evidence="1">tRNA(Phe) 7-((3-amino-3-carboxypropyl)-4-demethylwyosine(37)-N(4))-methyltransferase</fullName>
        <ecNumber evidence="1">2.1.1.282</ecNumber>
    </recommendedName>
    <alternativeName>
        <fullName evidence="1">tRNA wyosine derivatives biosynthesis protein Taw3</fullName>
    </alternativeName>
</protein>